<dbReference type="EMBL" id="AF298830">
    <property type="protein sequence ID" value="AAK07828.1"/>
    <property type="molecule type" value="Genomic_DNA"/>
</dbReference>
<dbReference type="EMBL" id="AF317832">
    <property type="protein sequence ID" value="AAK12090.1"/>
    <property type="molecule type" value="Genomic_DNA"/>
</dbReference>
<dbReference type="SMR" id="Q9BMX3"/>
<dbReference type="GO" id="GO:0005737">
    <property type="term" value="C:cytoplasm"/>
    <property type="evidence" value="ECO:0007669"/>
    <property type="project" value="UniProtKB-SubCell"/>
</dbReference>
<dbReference type="GO" id="GO:0003747">
    <property type="term" value="F:translation release factor activity"/>
    <property type="evidence" value="ECO:0007669"/>
    <property type="project" value="InterPro"/>
</dbReference>
<dbReference type="FunFam" id="3.30.1330.30:FF:000006">
    <property type="entry name" value="Peptide chain release factor subunit 1"/>
    <property type="match status" value="1"/>
</dbReference>
<dbReference type="FunFam" id="3.30.420.60:FF:000003">
    <property type="entry name" value="Peptide chain release factor subunit 1"/>
    <property type="match status" value="1"/>
</dbReference>
<dbReference type="Gene3D" id="3.30.1330.30">
    <property type="match status" value="1"/>
</dbReference>
<dbReference type="Gene3D" id="3.30.960.10">
    <property type="entry name" value="eRF1 domain 1"/>
    <property type="match status" value="1"/>
</dbReference>
<dbReference type="Gene3D" id="3.30.420.60">
    <property type="entry name" value="eRF1 domain 2"/>
    <property type="match status" value="1"/>
</dbReference>
<dbReference type="InterPro" id="IPR042226">
    <property type="entry name" value="eFR1_2_sf"/>
</dbReference>
<dbReference type="InterPro" id="IPR005140">
    <property type="entry name" value="eRF1_1_Pelota"/>
</dbReference>
<dbReference type="InterPro" id="IPR024049">
    <property type="entry name" value="eRF1_1_sf"/>
</dbReference>
<dbReference type="InterPro" id="IPR005141">
    <property type="entry name" value="eRF1_2"/>
</dbReference>
<dbReference type="InterPro" id="IPR005142">
    <property type="entry name" value="eRF1_3"/>
</dbReference>
<dbReference type="InterPro" id="IPR004403">
    <property type="entry name" value="Peptide_chain-rel_eRF1/aRF1"/>
</dbReference>
<dbReference type="InterPro" id="IPR029064">
    <property type="entry name" value="Ribosomal_eL30-like_sf"/>
</dbReference>
<dbReference type="NCBIfam" id="TIGR03676">
    <property type="entry name" value="aRF1_eRF1"/>
    <property type="match status" value="1"/>
</dbReference>
<dbReference type="PANTHER" id="PTHR10113">
    <property type="entry name" value="PEPTIDE CHAIN RELEASE FACTOR SUBUNIT 1"/>
    <property type="match status" value="1"/>
</dbReference>
<dbReference type="Pfam" id="PF03463">
    <property type="entry name" value="eRF1_1"/>
    <property type="match status" value="1"/>
</dbReference>
<dbReference type="Pfam" id="PF03464">
    <property type="entry name" value="eRF1_2"/>
    <property type="match status" value="1"/>
</dbReference>
<dbReference type="Pfam" id="PF03465">
    <property type="entry name" value="eRF1_3"/>
    <property type="match status" value="1"/>
</dbReference>
<dbReference type="SMART" id="SM01194">
    <property type="entry name" value="eRF1_1"/>
    <property type="match status" value="1"/>
</dbReference>
<dbReference type="SUPFAM" id="SSF55315">
    <property type="entry name" value="L30e-like"/>
    <property type="match status" value="1"/>
</dbReference>
<dbReference type="SUPFAM" id="SSF55481">
    <property type="entry name" value="N-terminal domain of eukaryotic peptide chain release factor subunit 1, ERF1"/>
    <property type="match status" value="1"/>
</dbReference>
<dbReference type="SUPFAM" id="SSF53137">
    <property type="entry name" value="Translational machinery components"/>
    <property type="match status" value="1"/>
</dbReference>
<proteinExistence type="inferred from homology"/>
<feature type="chain" id="PRO_0000143156" description="Eukaryotic peptide chain release factor subunit 1">
    <location>
        <begin position="1"/>
        <end position="445"/>
    </location>
</feature>
<protein>
    <recommendedName>
        <fullName>Eukaryotic peptide chain release factor subunit 1</fullName>
        <shortName>Eukaryotic release factor 1</shortName>
        <shortName>eRF1</shortName>
    </recommendedName>
</protein>
<comment type="function">
    <text>Directs the termination of nascent peptide synthesis (translation) in response to the termination codon UGA. In O.trifallax UAA and UAG codes for glutamine.</text>
</comment>
<comment type="subunit">
    <text>Heterodimer of two subunits, one of which binds GTP.</text>
</comment>
<comment type="subcellular location">
    <subcellularLocation>
        <location>Cytoplasm</location>
    </subcellularLocation>
</comment>
<comment type="similarity">
    <text evidence="1">Belongs to the eukaryotic release factor 1 family.</text>
</comment>
<evidence type="ECO:0000305" key="1"/>
<gene>
    <name type="primary">ERF1</name>
</gene>
<keyword id="KW-0963">Cytoplasm</keyword>
<keyword id="KW-0648">Protein biosynthesis</keyword>
<organism>
    <name type="scientific">Oxytricha trifallax</name>
    <name type="common">Sterkiella histriomuscorum</name>
    <dbReference type="NCBI Taxonomy" id="94289"/>
    <lineage>
        <taxon>Eukaryota</taxon>
        <taxon>Sar</taxon>
        <taxon>Alveolata</taxon>
        <taxon>Ciliophora</taxon>
        <taxon>Intramacronucleata</taxon>
        <taxon>Spirotrichea</taxon>
        <taxon>Stichotrichia</taxon>
        <taxon>Sporadotrichida</taxon>
        <taxon>Oxytrichidae</taxon>
        <taxon>Stylonychinae</taxon>
        <taxon>Sterkiella</taxon>
    </lineage>
</organism>
<reference key="1">
    <citation type="journal article" date="2001" name="Nucleic Acids Res.">
        <title>Class I release factors in ciliates with variant genetic codes.</title>
        <authorList>
            <person name="Inagaki Y."/>
            <person name="Doolittle W.F."/>
        </authorList>
    </citation>
    <scope>NUCLEOTIDE SEQUENCE [GENOMIC DNA]</scope>
</reference>
<reference key="2">
    <citation type="journal article" date="2001" name="Curr. Biol.">
        <title>The molecular basis of nuclear genetic code change in ciliates.</title>
        <authorList>
            <person name="Lozupone C.A."/>
            <person name="Knight R.D."/>
            <person name="Landweber L.F."/>
        </authorList>
    </citation>
    <scope>NUCLEOTIDE SEQUENCE [GENOMIC DNA]</scope>
</reference>
<name>ERF1_OXYTR</name>
<sequence length="445" mass="49716">MVESIAAGQVSDNKHIEMWKVKKLISKLEHCKGNGTSMVSLIIPPKDDINKYGKLLTGEMSAAQNIKSRITKQSVVTAITSTKEKLKLYKQTPTNGLCLYCGVIYMEDGKTEKKINFDFEPFRPINQFLYFCGGKFQTEPLLSLLADDDKFGFIIVDGNGALYATLQGNSREILQKITVELPKKHRKGGQSSVRFARLREEKRHNYLRKVAELANQNFITNDRPNVTGIVLAGNAAFKNELAETDMLDKRLLPVICAVVDVSYGGENGLNEAITLAAEALTNVKFVAEKKLVSKFFEEIALDTGMIVFGVDDTMKALELGAVETVLLFEELDINRYVLKNPVKGDTKTIYLNSTQQKDSKYFKDRETGMDLDVVSEDSLAEWLCHNYQNYGAQVEFITDKSQEGFQFVKGFGGIGGFLRYKVDIEDHHGDLGAGGDDFDPDTDFI</sequence>
<accession>Q9BMX3</accession>
<accession>Q9BMM2</accession>